<protein>
    <recommendedName>
        <fullName evidence="1">Elongation factor 4</fullName>
        <shortName evidence="1">EF-4</shortName>
        <ecNumber evidence="1">3.6.5.n1</ecNumber>
    </recommendedName>
    <alternativeName>
        <fullName evidence="1">Ribosomal back-translocase LepA</fullName>
    </alternativeName>
</protein>
<organism>
    <name type="scientific">Yersinia pseudotuberculosis serotype O:1b (strain IP 31758)</name>
    <dbReference type="NCBI Taxonomy" id="349747"/>
    <lineage>
        <taxon>Bacteria</taxon>
        <taxon>Pseudomonadati</taxon>
        <taxon>Pseudomonadota</taxon>
        <taxon>Gammaproteobacteria</taxon>
        <taxon>Enterobacterales</taxon>
        <taxon>Yersiniaceae</taxon>
        <taxon>Yersinia</taxon>
    </lineage>
</organism>
<reference key="1">
    <citation type="journal article" date="2007" name="PLoS Genet.">
        <title>The complete genome sequence of Yersinia pseudotuberculosis IP31758, the causative agent of Far East scarlet-like fever.</title>
        <authorList>
            <person name="Eppinger M."/>
            <person name="Rosovitz M.J."/>
            <person name="Fricke W.F."/>
            <person name="Rasko D.A."/>
            <person name="Kokorina G."/>
            <person name="Fayolle C."/>
            <person name="Lindler L.E."/>
            <person name="Carniel E."/>
            <person name="Ravel J."/>
        </authorList>
    </citation>
    <scope>NUCLEOTIDE SEQUENCE [LARGE SCALE GENOMIC DNA]</scope>
    <source>
        <strain>IP 31758</strain>
    </source>
</reference>
<comment type="function">
    <text evidence="1">Required for accurate and efficient protein synthesis under certain stress conditions. May act as a fidelity factor of the translation reaction, by catalyzing a one-codon backward translocation of tRNAs on improperly translocated ribosomes. Back-translocation proceeds from a post-translocation (POST) complex to a pre-translocation (PRE) complex, thus giving elongation factor G a second chance to translocate the tRNAs correctly. Binds to ribosomes in a GTP-dependent manner.</text>
</comment>
<comment type="catalytic activity">
    <reaction evidence="1">
        <text>GTP + H2O = GDP + phosphate + H(+)</text>
        <dbReference type="Rhea" id="RHEA:19669"/>
        <dbReference type="ChEBI" id="CHEBI:15377"/>
        <dbReference type="ChEBI" id="CHEBI:15378"/>
        <dbReference type="ChEBI" id="CHEBI:37565"/>
        <dbReference type="ChEBI" id="CHEBI:43474"/>
        <dbReference type="ChEBI" id="CHEBI:58189"/>
        <dbReference type="EC" id="3.6.5.n1"/>
    </reaction>
</comment>
<comment type="subcellular location">
    <subcellularLocation>
        <location evidence="1">Cell inner membrane</location>
        <topology evidence="1">Peripheral membrane protein</topology>
        <orientation evidence="1">Cytoplasmic side</orientation>
    </subcellularLocation>
</comment>
<comment type="similarity">
    <text evidence="1">Belongs to the TRAFAC class translation factor GTPase superfamily. Classic translation factor GTPase family. LepA subfamily.</text>
</comment>
<gene>
    <name evidence="1" type="primary">lepA</name>
    <name type="ordered locus">YpsIP31758_1134</name>
</gene>
<name>LEPA_YERP3</name>
<keyword id="KW-0997">Cell inner membrane</keyword>
<keyword id="KW-1003">Cell membrane</keyword>
<keyword id="KW-0342">GTP-binding</keyword>
<keyword id="KW-0378">Hydrolase</keyword>
<keyword id="KW-0472">Membrane</keyword>
<keyword id="KW-0547">Nucleotide-binding</keyword>
<keyword id="KW-0648">Protein biosynthesis</keyword>
<proteinExistence type="inferred from homology"/>
<feature type="chain" id="PRO_1000057480" description="Elongation factor 4">
    <location>
        <begin position="1"/>
        <end position="599"/>
    </location>
</feature>
<feature type="domain" description="tr-type G">
    <location>
        <begin position="2"/>
        <end position="184"/>
    </location>
</feature>
<feature type="binding site" evidence="1">
    <location>
        <begin position="14"/>
        <end position="19"/>
    </location>
    <ligand>
        <name>GTP</name>
        <dbReference type="ChEBI" id="CHEBI:37565"/>
    </ligand>
</feature>
<feature type="binding site" evidence="1">
    <location>
        <begin position="131"/>
        <end position="134"/>
    </location>
    <ligand>
        <name>GTP</name>
        <dbReference type="ChEBI" id="CHEBI:37565"/>
    </ligand>
</feature>
<accession>A7FFT7</accession>
<evidence type="ECO:0000255" key="1">
    <source>
        <dbReference type="HAMAP-Rule" id="MF_00071"/>
    </source>
</evidence>
<sequence>MKHIRNFSIIAHIDHGKSTLSDRIIQICGGLSEREMAAQVLDSMDLERERGITIKAQSVTLDYHSKDGQTYQLNFIDTPGHVDFSYEVSRSLAACEGALLVVDAGQGVEAQTLANCYTAMEMDLEVVPVLNKIDLPAADPERVAEEIEDIVGIDATDAIRCSAKTGVGVPDVLERLVRDIPAPEGDPNGPLQALIIDSWFDNYLGVVSLIRIKNGSLRKGDKVKVMSTGQSYNADRLGIFTPKRVDRDVLNCGEVGWLVCAIKDILGAPVGDTLTLTRNPAEKSLPGFKKVKPQVYAGLFPISSDDYESFRDALGKLSLNDASLFYEPESSTALGFGFRCGFLGLLHMEIIQERLEREYDLELITTAPTVVYEVITTNQETVYVDSPSKLPALNNIEELREPIAECHMLLPQEYLGNVITLCIEKRGTQTNMVYHGKQVALTYEIPMAEVVLDFFDRLKSTSRGYASLDYNFKRFQTSDMVRVDVLINNERVDALALITHRDNAQYRGRDLVEKMKELIPRQQFDIAIQAAIGNHIIARSTVKQLRKNVLAKCYGGDVSRKKKLLQKQKDGKKRMKQVGNVELPQEAFLAILHVGKDSK</sequence>
<dbReference type="EC" id="3.6.5.n1" evidence="1"/>
<dbReference type="EMBL" id="CP000720">
    <property type="protein sequence ID" value="ABS46153.1"/>
    <property type="molecule type" value="Genomic_DNA"/>
</dbReference>
<dbReference type="RefSeq" id="WP_002209677.1">
    <property type="nucleotide sequence ID" value="NC_009708.1"/>
</dbReference>
<dbReference type="SMR" id="A7FFT7"/>
<dbReference type="GeneID" id="57975975"/>
<dbReference type="KEGG" id="ypi:YpsIP31758_1134"/>
<dbReference type="HOGENOM" id="CLU_009995_3_3_6"/>
<dbReference type="Proteomes" id="UP000002412">
    <property type="component" value="Chromosome"/>
</dbReference>
<dbReference type="GO" id="GO:0005886">
    <property type="term" value="C:plasma membrane"/>
    <property type="evidence" value="ECO:0007669"/>
    <property type="project" value="UniProtKB-SubCell"/>
</dbReference>
<dbReference type="GO" id="GO:0005525">
    <property type="term" value="F:GTP binding"/>
    <property type="evidence" value="ECO:0007669"/>
    <property type="project" value="UniProtKB-UniRule"/>
</dbReference>
<dbReference type="GO" id="GO:0003924">
    <property type="term" value="F:GTPase activity"/>
    <property type="evidence" value="ECO:0007669"/>
    <property type="project" value="UniProtKB-UniRule"/>
</dbReference>
<dbReference type="GO" id="GO:0097216">
    <property type="term" value="F:guanosine tetraphosphate binding"/>
    <property type="evidence" value="ECO:0007669"/>
    <property type="project" value="UniProtKB-ARBA"/>
</dbReference>
<dbReference type="GO" id="GO:0043022">
    <property type="term" value="F:ribosome binding"/>
    <property type="evidence" value="ECO:0007669"/>
    <property type="project" value="UniProtKB-UniRule"/>
</dbReference>
<dbReference type="GO" id="GO:0003746">
    <property type="term" value="F:translation elongation factor activity"/>
    <property type="evidence" value="ECO:0007669"/>
    <property type="project" value="UniProtKB-UniRule"/>
</dbReference>
<dbReference type="GO" id="GO:0045727">
    <property type="term" value="P:positive regulation of translation"/>
    <property type="evidence" value="ECO:0007669"/>
    <property type="project" value="UniProtKB-UniRule"/>
</dbReference>
<dbReference type="CDD" id="cd03699">
    <property type="entry name" value="EF4_II"/>
    <property type="match status" value="1"/>
</dbReference>
<dbReference type="CDD" id="cd16260">
    <property type="entry name" value="EF4_III"/>
    <property type="match status" value="1"/>
</dbReference>
<dbReference type="CDD" id="cd01890">
    <property type="entry name" value="LepA"/>
    <property type="match status" value="1"/>
</dbReference>
<dbReference type="CDD" id="cd03709">
    <property type="entry name" value="lepA_C"/>
    <property type="match status" value="1"/>
</dbReference>
<dbReference type="FunFam" id="3.30.70.240:FF:000005">
    <property type="entry name" value="Elongation factor 4"/>
    <property type="match status" value="1"/>
</dbReference>
<dbReference type="FunFam" id="3.40.50.300:FF:000078">
    <property type="entry name" value="Elongation factor 4"/>
    <property type="match status" value="1"/>
</dbReference>
<dbReference type="FunFam" id="2.40.30.10:FF:000015">
    <property type="entry name" value="Translation factor GUF1, mitochondrial"/>
    <property type="match status" value="1"/>
</dbReference>
<dbReference type="FunFam" id="3.30.70.2570:FF:000001">
    <property type="entry name" value="Translation factor GUF1, mitochondrial"/>
    <property type="match status" value="1"/>
</dbReference>
<dbReference type="FunFam" id="3.30.70.870:FF:000004">
    <property type="entry name" value="Translation factor GUF1, mitochondrial"/>
    <property type="match status" value="1"/>
</dbReference>
<dbReference type="Gene3D" id="3.30.70.240">
    <property type="match status" value="1"/>
</dbReference>
<dbReference type="Gene3D" id="3.30.70.2570">
    <property type="entry name" value="Elongation factor 4, C-terminal domain"/>
    <property type="match status" value="1"/>
</dbReference>
<dbReference type="Gene3D" id="3.30.70.870">
    <property type="entry name" value="Elongation Factor G (Translational Gtpase), domain 3"/>
    <property type="match status" value="1"/>
</dbReference>
<dbReference type="Gene3D" id="3.40.50.300">
    <property type="entry name" value="P-loop containing nucleotide triphosphate hydrolases"/>
    <property type="match status" value="1"/>
</dbReference>
<dbReference type="Gene3D" id="2.40.30.10">
    <property type="entry name" value="Translation factors"/>
    <property type="match status" value="1"/>
</dbReference>
<dbReference type="HAMAP" id="MF_00071">
    <property type="entry name" value="LepA"/>
    <property type="match status" value="1"/>
</dbReference>
<dbReference type="InterPro" id="IPR006297">
    <property type="entry name" value="EF-4"/>
</dbReference>
<dbReference type="InterPro" id="IPR035647">
    <property type="entry name" value="EFG_III/V"/>
</dbReference>
<dbReference type="InterPro" id="IPR000640">
    <property type="entry name" value="EFG_V-like"/>
</dbReference>
<dbReference type="InterPro" id="IPR004161">
    <property type="entry name" value="EFTu-like_2"/>
</dbReference>
<dbReference type="InterPro" id="IPR031157">
    <property type="entry name" value="G_TR_CS"/>
</dbReference>
<dbReference type="InterPro" id="IPR038363">
    <property type="entry name" value="LepA_C_sf"/>
</dbReference>
<dbReference type="InterPro" id="IPR013842">
    <property type="entry name" value="LepA_CTD"/>
</dbReference>
<dbReference type="InterPro" id="IPR035654">
    <property type="entry name" value="LepA_IV"/>
</dbReference>
<dbReference type="InterPro" id="IPR027417">
    <property type="entry name" value="P-loop_NTPase"/>
</dbReference>
<dbReference type="InterPro" id="IPR005225">
    <property type="entry name" value="Small_GTP-bd"/>
</dbReference>
<dbReference type="InterPro" id="IPR000795">
    <property type="entry name" value="T_Tr_GTP-bd_dom"/>
</dbReference>
<dbReference type="NCBIfam" id="TIGR01393">
    <property type="entry name" value="lepA"/>
    <property type="match status" value="1"/>
</dbReference>
<dbReference type="NCBIfam" id="TIGR00231">
    <property type="entry name" value="small_GTP"/>
    <property type="match status" value="1"/>
</dbReference>
<dbReference type="PANTHER" id="PTHR43512:SF4">
    <property type="entry name" value="TRANSLATION FACTOR GUF1 HOMOLOG, CHLOROPLASTIC"/>
    <property type="match status" value="1"/>
</dbReference>
<dbReference type="PANTHER" id="PTHR43512">
    <property type="entry name" value="TRANSLATION FACTOR GUF1-RELATED"/>
    <property type="match status" value="1"/>
</dbReference>
<dbReference type="Pfam" id="PF00679">
    <property type="entry name" value="EFG_C"/>
    <property type="match status" value="1"/>
</dbReference>
<dbReference type="Pfam" id="PF00009">
    <property type="entry name" value="GTP_EFTU"/>
    <property type="match status" value="1"/>
</dbReference>
<dbReference type="Pfam" id="PF03144">
    <property type="entry name" value="GTP_EFTU_D2"/>
    <property type="match status" value="1"/>
</dbReference>
<dbReference type="Pfam" id="PF06421">
    <property type="entry name" value="LepA_C"/>
    <property type="match status" value="1"/>
</dbReference>
<dbReference type="PRINTS" id="PR00315">
    <property type="entry name" value="ELONGATNFCT"/>
</dbReference>
<dbReference type="SUPFAM" id="SSF54980">
    <property type="entry name" value="EF-G C-terminal domain-like"/>
    <property type="match status" value="2"/>
</dbReference>
<dbReference type="SUPFAM" id="SSF52540">
    <property type="entry name" value="P-loop containing nucleoside triphosphate hydrolases"/>
    <property type="match status" value="1"/>
</dbReference>
<dbReference type="PROSITE" id="PS00301">
    <property type="entry name" value="G_TR_1"/>
    <property type="match status" value="1"/>
</dbReference>
<dbReference type="PROSITE" id="PS51722">
    <property type="entry name" value="G_TR_2"/>
    <property type="match status" value="1"/>
</dbReference>